<comment type="function">
    <text evidence="1">Involved in the biosynthesis of branched-chain amino acids (BCAA). Catalyzes an alkyl-migration followed by a ketol-acid reduction of (S)-2-acetolactate (S2AL) to yield (R)-2,3-dihydroxy-isovalerate. In the isomerase reaction, S2AL is rearranged via a Mg-dependent methyl migration to produce 3-hydroxy-3-methyl-2-ketobutyrate (HMKB). In the reductase reaction, this 2-ketoacid undergoes a metal-dependent reduction by NADPH to yield (R)-2,3-dihydroxy-isovalerate.</text>
</comment>
<comment type="catalytic activity">
    <reaction evidence="1">
        <text>(2R)-2,3-dihydroxy-3-methylbutanoate + NADP(+) = (2S)-2-acetolactate + NADPH + H(+)</text>
        <dbReference type="Rhea" id="RHEA:22068"/>
        <dbReference type="ChEBI" id="CHEBI:15378"/>
        <dbReference type="ChEBI" id="CHEBI:49072"/>
        <dbReference type="ChEBI" id="CHEBI:57783"/>
        <dbReference type="ChEBI" id="CHEBI:58349"/>
        <dbReference type="ChEBI" id="CHEBI:58476"/>
        <dbReference type="EC" id="1.1.1.86"/>
    </reaction>
</comment>
<comment type="catalytic activity">
    <reaction evidence="1">
        <text>(2R,3R)-2,3-dihydroxy-3-methylpentanoate + NADP(+) = (S)-2-ethyl-2-hydroxy-3-oxobutanoate + NADPH + H(+)</text>
        <dbReference type="Rhea" id="RHEA:13493"/>
        <dbReference type="ChEBI" id="CHEBI:15378"/>
        <dbReference type="ChEBI" id="CHEBI:49256"/>
        <dbReference type="ChEBI" id="CHEBI:49258"/>
        <dbReference type="ChEBI" id="CHEBI:57783"/>
        <dbReference type="ChEBI" id="CHEBI:58349"/>
        <dbReference type="EC" id="1.1.1.86"/>
    </reaction>
</comment>
<comment type="cofactor">
    <cofactor evidence="1">
        <name>Mg(2+)</name>
        <dbReference type="ChEBI" id="CHEBI:18420"/>
    </cofactor>
    <text evidence="1">Binds 2 magnesium ions per subunit.</text>
</comment>
<comment type="pathway">
    <text evidence="1">Amino-acid biosynthesis; L-isoleucine biosynthesis; L-isoleucine from 2-oxobutanoate: step 2/4.</text>
</comment>
<comment type="pathway">
    <text evidence="1">Amino-acid biosynthesis; L-valine biosynthesis; L-valine from pyruvate: step 2/4.</text>
</comment>
<comment type="similarity">
    <text evidence="1">Belongs to the ketol-acid reductoisomerase family.</text>
</comment>
<gene>
    <name evidence="1" type="primary">ilvC</name>
    <name type="ordered locus">llmg_1277</name>
</gene>
<reference key="1">
    <citation type="journal article" date="2007" name="J. Bacteriol.">
        <title>The complete genome sequence of the lactic acid bacterial paradigm Lactococcus lactis subsp. cremoris MG1363.</title>
        <authorList>
            <person name="Wegmann U."/>
            <person name="O'Connell-Motherway M."/>
            <person name="Zomer A."/>
            <person name="Buist G."/>
            <person name="Shearman C."/>
            <person name="Canchaya C."/>
            <person name="Ventura M."/>
            <person name="Goesmann A."/>
            <person name="Gasson M.J."/>
            <person name="Kuipers O.P."/>
            <person name="van Sinderen D."/>
            <person name="Kok J."/>
        </authorList>
    </citation>
    <scope>NUCLEOTIDE SEQUENCE [LARGE SCALE GENOMIC DNA]</scope>
    <source>
        <strain>MG1363</strain>
    </source>
</reference>
<sequence>MAVTMYYEEDVEVAALAGKKIAVIGYGSQGHAHAQNLRDSGHDVIIGVRQGKSFDKAKEDGFETFEVGEAVAKADVIMVLAPDELQQSIYEEDIKPNLKAGSALGFAHGFNIHFGYIEVPEDVDVFMVAPKAPGHLVRRTFTEGFGTPALFVSHQNATGHAREIAMDWAKGIGCARVGIIETTFKEETEEDLFGEQAVLCGGLTALVEAGFETLTEAGYAGELAYFEVLHEMKLIVDLMYEGGFTKMRQSISNTAEFGDYVTGPRIITDEVKKNMKLVLADIQSGKFAQDFVDDFKAGRPKLTAYREAAKNLEIEKIGAELRKAMPFTQSGDDDAFKIYQ</sequence>
<feature type="chain" id="PRO_1000050521" description="Ketol-acid reductoisomerase (NADP(+))">
    <location>
        <begin position="1"/>
        <end position="340"/>
    </location>
</feature>
<feature type="domain" description="KARI N-terminal Rossmann" evidence="2">
    <location>
        <begin position="3"/>
        <end position="182"/>
    </location>
</feature>
<feature type="domain" description="KARI C-terminal knotted" evidence="3">
    <location>
        <begin position="183"/>
        <end position="328"/>
    </location>
</feature>
<feature type="active site" evidence="1">
    <location>
        <position position="108"/>
    </location>
</feature>
<feature type="binding site" evidence="1">
    <location>
        <begin position="26"/>
        <end position="29"/>
    </location>
    <ligand>
        <name>NADP(+)</name>
        <dbReference type="ChEBI" id="CHEBI:58349"/>
    </ligand>
</feature>
<feature type="binding site" evidence="1">
    <location>
        <position position="49"/>
    </location>
    <ligand>
        <name>NADP(+)</name>
        <dbReference type="ChEBI" id="CHEBI:58349"/>
    </ligand>
</feature>
<feature type="binding site" evidence="1">
    <location>
        <position position="53"/>
    </location>
    <ligand>
        <name>NADP(+)</name>
        <dbReference type="ChEBI" id="CHEBI:58349"/>
    </ligand>
</feature>
<feature type="binding site" evidence="1">
    <location>
        <begin position="83"/>
        <end position="86"/>
    </location>
    <ligand>
        <name>NADP(+)</name>
        <dbReference type="ChEBI" id="CHEBI:58349"/>
    </ligand>
</feature>
<feature type="binding site" evidence="1">
    <location>
        <position position="134"/>
    </location>
    <ligand>
        <name>NADP(+)</name>
        <dbReference type="ChEBI" id="CHEBI:58349"/>
    </ligand>
</feature>
<feature type="binding site" evidence="1">
    <location>
        <position position="191"/>
    </location>
    <ligand>
        <name>Mg(2+)</name>
        <dbReference type="ChEBI" id="CHEBI:18420"/>
        <label>1</label>
    </ligand>
</feature>
<feature type="binding site" evidence="1">
    <location>
        <position position="191"/>
    </location>
    <ligand>
        <name>Mg(2+)</name>
        <dbReference type="ChEBI" id="CHEBI:18420"/>
        <label>2</label>
    </ligand>
</feature>
<feature type="binding site" evidence="1">
    <location>
        <position position="195"/>
    </location>
    <ligand>
        <name>Mg(2+)</name>
        <dbReference type="ChEBI" id="CHEBI:18420"/>
        <label>1</label>
    </ligand>
</feature>
<feature type="binding site" evidence="1">
    <location>
        <position position="227"/>
    </location>
    <ligand>
        <name>Mg(2+)</name>
        <dbReference type="ChEBI" id="CHEBI:18420"/>
        <label>2</label>
    </ligand>
</feature>
<feature type="binding site" evidence="1">
    <location>
        <position position="231"/>
    </location>
    <ligand>
        <name>Mg(2+)</name>
        <dbReference type="ChEBI" id="CHEBI:18420"/>
        <label>2</label>
    </ligand>
</feature>
<feature type="binding site" evidence="1">
    <location>
        <position position="252"/>
    </location>
    <ligand>
        <name>substrate</name>
    </ligand>
</feature>
<protein>
    <recommendedName>
        <fullName evidence="1">Ketol-acid reductoisomerase (NADP(+))</fullName>
        <shortName evidence="1">KARI</shortName>
        <ecNumber evidence="1">1.1.1.86</ecNumber>
    </recommendedName>
    <alternativeName>
        <fullName evidence="1">Acetohydroxy-acid isomeroreductase</fullName>
        <shortName evidence="1">AHIR</shortName>
    </alternativeName>
    <alternativeName>
        <fullName evidence="1">Alpha-keto-beta-hydroxylacyl reductoisomerase</fullName>
    </alternativeName>
    <alternativeName>
        <fullName evidence="1">Ketol-acid reductoisomerase type 1</fullName>
    </alternativeName>
    <alternativeName>
        <fullName evidence="1">Ketol-acid reductoisomerase type I</fullName>
    </alternativeName>
</protein>
<evidence type="ECO:0000255" key="1">
    <source>
        <dbReference type="HAMAP-Rule" id="MF_00435"/>
    </source>
</evidence>
<evidence type="ECO:0000255" key="2">
    <source>
        <dbReference type="PROSITE-ProRule" id="PRU01197"/>
    </source>
</evidence>
<evidence type="ECO:0000255" key="3">
    <source>
        <dbReference type="PROSITE-ProRule" id="PRU01198"/>
    </source>
</evidence>
<proteinExistence type="inferred from homology"/>
<name>ILVC_LACLM</name>
<organism>
    <name type="scientific">Lactococcus lactis subsp. cremoris (strain MG1363)</name>
    <dbReference type="NCBI Taxonomy" id="416870"/>
    <lineage>
        <taxon>Bacteria</taxon>
        <taxon>Bacillati</taxon>
        <taxon>Bacillota</taxon>
        <taxon>Bacilli</taxon>
        <taxon>Lactobacillales</taxon>
        <taxon>Streptococcaceae</taxon>
        <taxon>Lactococcus</taxon>
        <taxon>Lactococcus cremoris subsp. cremoris</taxon>
    </lineage>
</organism>
<dbReference type="EC" id="1.1.1.86" evidence="1"/>
<dbReference type="EMBL" id="AM406671">
    <property type="protein sequence ID" value="CAL97870.1"/>
    <property type="molecule type" value="Genomic_DNA"/>
</dbReference>
<dbReference type="RefSeq" id="WP_011835156.1">
    <property type="nucleotide sequence ID" value="NC_009004.1"/>
</dbReference>
<dbReference type="SMR" id="A2RKQ6"/>
<dbReference type="STRING" id="416870.llmg_1277"/>
<dbReference type="KEGG" id="llm:llmg_1277"/>
<dbReference type="eggNOG" id="COG0059">
    <property type="taxonomic scope" value="Bacteria"/>
</dbReference>
<dbReference type="HOGENOM" id="CLU_033821_0_1_9"/>
<dbReference type="OrthoDB" id="9804088at2"/>
<dbReference type="PhylomeDB" id="A2RKQ6"/>
<dbReference type="UniPathway" id="UPA00047">
    <property type="reaction ID" value="UER00056"/>
</dbReference>
<dbReference type="UniPathway" id="UPA00049">
    <property type="reaction ID" value="UER00060"/>
</dbReference>
<dbReference type="Proteomes" id="UP000000364">
    <property type="component" value="Chromosome"/>
</dbReference>
<dbReference type="GO" id="GO:0005829">
    <property type="term" value="C:cytosol"/>
    <property type="evidence" value="ECO:0007669"/>
    <property type="project" value="TreeGrafter"/>
</dbReference>
<dbReference type="GO" id="GO:0004455">
    <property type="term" value="F:ketol-acid reductoisomerase activity"/>
    <property type="evidence" value="ECO:0007669"/>
    <property type="project" value="UniProtKB-UniRule"/>
</dbReference>
<dbReference type="GO" id="GO:0000287">
    <property type="term" value="F:magnesium ion binding"/>
    <property type="evidence" value="ECO:0007669"/>
    <property type="project" value="UniProtKB-UniRule"/>
</dbReference>
<dbReference type="GO" id="GO:0050661">
    <property type="term" value="F:NADP binding"/>
    <property type="evidence" value="ECO:0007669"/>
    <property type="project" value="InterPro"/>
</dbReference>
<dbReference type="GO" id="GO:0009097">
    <property type="term" value="P:isoleucine biosynthetic process"/>
    <property type="evidence" value="ECO:0007669"/>
    <property type="project" value="UniProtKB-UniRule"/>
</dbReference>
<dbReference type="GO" id="GO:0009099">
    <property type="term" value="P:L-valine biosynthetic process"/>
    <property type="evidence" value="ECO:0007669"/>
    <property type="project" value="UniProtKB-UniRule"/>
</dbReference>
<dbReference type="FunFam" id="3.40.50.720:FF:000023">
    <property type="entry name" value="Ketol-acid reductoisomerase (NADP(+))"/>
    <property type="match status" value="1"/>
</dbReference>
<dbReference type="Gene3D" id="6.10.240.10">
    <property type="match status" value="1"/>
</dbReference>
<dbReference type="Gene3D" id="3.40.50.720">
    <property type="entry name" value="NAD(P)-binding Rossmann-like Domain"/>
    <property type="match status" value="1"/>
</dbReference>
<dbReference type="HAMAP" id="MF_00435">
    <property type="entry name" value="IlvC"/>
    <property type="match status" value="1"/>
</dbReference>
<dbReference type="InterPro" id="IPR008927">
    <property type="entry name" value="6-PGluconate_DH-like_C_sf"/>
</dbReference>
<dbReference type="InterPro" id="IPR013023">
    <property type="entry name" value="KARI"/>
</dbReference>
<dbReference type="InterPro" id="IPR000506">
    <property type="entry name" value="KARI_C"/>
</dbReference>
<dbReference type="InterPro" id="IPR013116">
    <property type="entry name" value="KARI_N"/>
</dbReference>
<dbReference type="InterPro" id="IPR014359">
    <property type="entry name" value="KARI_prok"/>
</dbReference>
<dbReference type="InterPro" id="IPR036291">
    <property type="entry name" value="NAD(P)-bd_dom_sf"/>
</dbReference>
<dbReference type="NCBIfam" id="TIGR00465">
    <property type="entry name" value="ilvC"/>
    <property type="match status" value="1"/>
</dbReference>
<dbReference type="NCBIfam" id="NF004017">
    <property type="entry name" value="PRK05479.1"/>
    <property type="match status" value="1"/>
</dbReference>
<dbReference type="NCBIfam" id="NF009940">
    <property type="entry name" value="PRK13403.1"/>
    <property type="match status" value="1"/>
</dbReference>
<dbReference type="PANTHER" id="PTHR21371">
    <property type="entry name" value="KETOL-ACID REDUCTOISOMERASE, MITOCHONDRIAL"/>
    <property type="match status" value="1"/>
</dbReference>
<dbReference type="PANTHER" id="PTHR21371:SF1">
    <property type="entry name" value="KETOL-ACID REDUCTOISOMERASE, MITOCHONDRIAL"/>
    <property type="match status" value="1"/>
</dbReference>
<dbReference type="Pfam" id="PF01450">
    <property type="entry name" value="KARI_C"/>
    <property type="match status" value="1"/>
</dbReference>
<dbReference type="Pfam" id="PF07991">
    <property type="entry name" value="KARI_N"/>
    <property type="match status" value="1"/>
</dbReference>
<dbReference type="PIRSF" id="PIRSF000116">
    <property type="entry name" value="IlvC_gammaproteo"/>
    <property type="match status" value="1"/>
</dbReference>
<dbReference type="SUPFAM" id="SSF48179">
    <property type="entry name" value="6-phosphogluconate dehydrogenase C-terminal domain-like"/>
    <property type="match status" value="1"/>
</dbReference>
<dbReference type="SUPFAM" id="SSF51735">
    <property type="entry name" value="NAD(P)-binding Rossmann-fold domains"/>
    <property type="match status" value="1"/>
</dbReference>
<dbReference type="PROSITE" id="PS51851">
    <property type="entry name" value="KARI_C"/>
    <property type="match status" value="1"/>
</dbReference>
<dbReference type="PROSITE" id="PS51850">
    <property type="entry name" value="KARI_N"/>
    <property type="match status" value="1"/>
</dbReference>
<accession>A2RKQ6</accession>
<keyword id="KW-0028">Amino-acid biosynthesis</keyword>
<keyword id="KW-0100">Branched-chain amino acid biosynthesis</keyword>
<keyword id="KW-0460">Magnesium</keyword>
<keyword id="KW-0479">Metal-binding</keyword>
<keyword id="KW-0521">NADP</keyword>
<keyword id="KW-0560">Oxidoreductase</keyword>